<accession>Q57P04</accession>
<feature type="chain" id="PRO_0000239244" description="Zinc transport protein ZntB">
    <location>
        <begin position="1"/>
        <end position="327"/>
    </location>
</feature>
<feature type="topological domain" description="Cytoplasmic" evidence="1">
    <location>
        <begin position="1"/>
        <end position="273"/>
    </location>
</feature>
<feature type="transmembrane region" description="Helical" evidence="1">
    <location>
        <begin position="274"/>
        <end position="294"/>
    </location>
</feature>
<feature type="topological domain" description="Periplasmic" evidence="1">
    <location>
        <begin position="295"/>
        <end position="300"/>
    </location>
</feature>
<feature type="transmembrane region" description="Helical" evidence="1">
    <location>
        <begin position="301"/>
        <end position="321"/>
    </location>
</feature>
<feature type="topological domain" description="Cytoplasmic" evidence="1">
    <location>
        <begin position="322"/>
        <end position="327"/>
    </location>
</feature>
<reference key="1">
    <citation type="journal article" date="2005" name="Nucleic Acids Res.">
        <title>The genome sequence of Salmonella enterica serovar Choleraesuis, a highly invasive and resistant zoonotic pathogen.</title>
        <authorList>
            <person name="Chiu C.-H."/>
            <person name="Tang P."/>
            <person name="Chu C."/>
            <person name="Hu S."/>
            <person name="Bao Q."/>
            <person name="Yu J."/>
            <person name="Chou Y.-Y."/>
            <person name="Wang H.-S."/>
            <person name="Lee Y.-S."/>
        </authorList>
    </citation>
    <scope>NUCLEOTIDE SEQUENCE [LARGE SCALE GENOMIC DNA]</scope>
    <source>
        <strain>SC-B67</strain>
    </source>
</reference>
<proteinExistence type="inferred from homology"/>
<name>ZNTB_SALCH</name>
<comment type="function">
    <text evidence="1">Zinc transporter. Acts as a Zn(2+):proton symporter, which likely mediates zinc ion uptake.</text>
</comment>
<comment type="catalytic activity">
    <reaction evidence="1">
        <text>Zn(2+)(out) + H(+)(out) = Zn(2+)(in) + H(+)(in)</text>
        <dbReference type="Rhea" id="RHEA:71195"/>
        <dbReference type="ChEBI" id="CHEBI:15378"/>
        <dbReference type="ChEBI" id="CHEBI:29105"/>
    </reaction>
    <physiologicalReaction direction="left-to-right" evidence="1">
        <dbReference type="Rhea" id="RHEA:71196"/>
    </physiologicalReaction>
</comment>
<comment type="subcellular location">
    <subcellularLocation>
        <location evidence="1">Cell inner membrane</location>
        <topology evidence="1">Multi-pass membrane protein</topology>
    </subcellularLocation>
</comment>
<comment type="similarity">
    <text evidence="1">Belongs to the CorA metal ion transporter (MIT) (TC 1.A.35) family.</text>
</comment>
<gene>
    <name evidence="1" type="primary">zntB</name>
    <name type="ordered locus">SCH_1651</name>
</gene>
<organism>
    <name type="scientific">Salmonella choleraesuis (strain SC-B67)</name>
    <dbReference type="NCBI Taxonomy" id="321314"/>
    <lineage>
        <taxon>Bacteria</taxon>
        <taxon>Pseudomonadati</taxon>
        <taxon>Pseudomonadota</taxon>
        <taxon>Gammaproteobacteria</taxon>
        <taxon>Enterobacterales</taxon>
        <taxon>Enterobacteriaceae</taxon>
        <taxon>Salmonella</taxon>
    </lineage>
</organism>
<keyword id="KW-0997">Cell inner membrane</keyword>
<keyword id="KW-1003">Cell membrane</keyword>
<keyword id="KW-0406">Ion transport</keyword>
<keyword id="KW-0472">Membrane</keyword>
<keyword id="KW-0812">Transmembrane</keyword>
<keyword id="KW-1133">Transmembrane helix</keyword>
<keyword id="KW-0813">Transport</keyword>
<keyword id="KW-0862">Zinc</keyword>
<sequence length="327" mass="36740">MEAIKGSDVNVPDAVFAWLLDGHGGVKPLEDNDVIDSQHPCWLHLNYTHPDSARWLASTPLLPNNVRDALAGESSRPRVSRMGEGTLITLRCINGSTDERPDQLVAMRLYMDERFIVSTRQRKVLALDDVVSDLQEGTGPVDCGGWLVDVCDALTDHASEFIEELHDKIIDLEDNLLDQQIPPRGFLALLRKQLIVMRRYMAPQRDVYARLASERLPWMSDDHRRRMQDIADRLGRGLDEIDACIARTGIMADEIAQVMQESLARRTYTMSLMAMVFLPSTFLTGLFGVNLGGIPGGGWRFGFSLFCILLVVLIGGVTLWLHRSKWL</sequence>
<protein>
    <recommendedName>
        <fullName evidence="1">Zinc transport protein ZntB</fullName>
    </recommendedName>
</protein>
<dbReference type="EMBL" id="AE017220">
    <property type="protein sequence ID" value="AAX65557.1"/>
    <property type="molecule type" value="Genomic_DNA"/>
</dbReference>
<dbReference type="RefSeq" id="WP_000387365.1">
    <property type="nucleotide sequence ID" value="NC_006905.1"/>
</dbReference>
<dbReference type="SMR" id="Q57P04"/>
<dbReference type="KEGG" id="sec:SCH_1651"/>
<dbReference type="HOGENOM" id="CLU_007127_2_0_6"/>
<dbReference type="Proteomes" id="UP000000538">
    <property type="component" value="Chromosome"/>
</dbReference>
<dbReference type="GO" id="GO:0005886">
    <property type="term" value="C:plasma membrane"/>
    <property type="evidence" value="ECO:0007669"/>
    <property type="project" value="UniProtKB-SubCell"/>
</dbReference>
<dbReference type="GO" id="GO:0050897">
    <property type="term" value="F:cobalt ion binding"/>
    <property type="evidence" value="ECO:0007669"/>
    <property type="project" value="TreeGrafter"/>
</dbReference>
<dbReference type="GO" id="GO:0015087">
    <property type="term" value="F:cobalt ion transmembrane transporter activity"/>
    <property type="evidence" value="ECO:0007669"/>
    <property type="project" value="TreeGrafter"/>
</dbReference>
<dbReference type="GO" id="GO:0000287">
    <property type="term" value="F:magnesium ion binding"/>
    <property type="evidence" value="ECO:0007669"/>
    <property type="project" value="TreeGrafter"/>
</dbReference>
<dbReference type="GO" id="GO:0015095">
    <property type="term" value="F:magnesium ion transmembrane transporter activity"/>
    <property type="evidence" value="ECO:0007669"/>
    <property type="project" value="TreeGrafter"/>
</dbReference>
<dbReference type="GO" id="GO:0005385">
    <property type="term" value="F:zinc ion transmembrane transporter activity"/>
    <property type="evidence" value="ECO:0007669"/>
    <property type="project" value="UniProtKB-UniRule"/>
</dbReference>
<dbReference type="CDD" id="cd12833">
    <property type="entry name" value="ZntB-like_1"/>
    <property type="match status" value="1"/>
</dbReference>
<dbReference type="FunFam" id="1.20.58.340:FF:000002">
    <property type="entry name" value="Zinc transport protein ZntB"/>
    <property type="match status" value="1"/>
</dbReference>
<dbReference type="FunFam" id="3.30.460.20:FF:000001">
    <property type="entry name" value="Zinc transport protein ZntB"/>
    <property type="match status" value="1"/>
</dbReference>
<dbReference type="Gene3D" id="3.30.460.20">
    <property type="entry name" value="CorA soluble domain-like"/>
    <property type="match status" value="1"/>
</dbReference>
<dbReference type="Gene3D" id="1.20.58.340">
    <property type="entry name" value="Magnesium transport protein CorA, transmembrane region"/>
    <property type="match status" value="2"/>
</dbReference>
<dbReference type="HAMAP" id="MF_01565">
    <property type="entry name" value="ZntB"/>
    <property type="match status" value="1"/>
</dbReference>
<dbReference type="InterPro" id="IPR045861">
    <property type="entry name" value="CorA_cytoplasmic_dom"/>
</dbReference>
<dbReference type="InterPro" id="IPR045863">
    <property type="entry name" value="CorA_TM1_TM2"/>
</dbReference>
<dbReference type="InterPro" id="IPR002523">
    <property type="entry name" value="MgTranspt_CorA/ZnTranspt_ZntB"/>
</dbReference>
<dbReference type="InterPro" id="IPR023714">
    <property type="entry name" value="Zn_transp_ZntB"/>
</dbReference>
<dbReference type="NCBIfam" id="NF007092">
    <property type="entry name" value="PRK09546.1"/>
    <property type="match status" value="1"/>
</dbReference>
<dbReference type="PANTHER" id="PTHR46494">
    <property type="entry name" value="CORA FAMILY METAL ION TRANSPORTER (EUROFUNG)"/>
    <property type="match status" value="1"/>
</dbReference>
<dbReference type="PANTHER" id="PTHR46494:SF3">
    <property type="entry name" value="ZINC TRANSPORT PROTEIN ZNTB"/>
    <property type="match status" value="1"/>
</dbReference>
<dbReference type="Pfam" id="PF01544">
    <property type="entry name" value="CorA"/>
    <property type="match status" value="1"/>
</dbReference>
<dbReference type="SUPFAM" id="SSF143865">
    <property type="entry name" value="CorA soluble domain-like"/>
    <property type="match status" value="1"/>
</dbReference>
<dbReference type="SUPFAM" id="SSF144083">
    <property type="entry name" value="Magnesium transport protein CorA, transmembrane region"/>
    <property type="match status" value="1"/>
</dbReference>
<evidence type="ECO:0000255" key="1">
    <source>
        <dbReference type="HAMAP-Rule" id="MF_01565"/>
    </source>
</evidence>